<organism>
    <name type="scientific">Bacillus licheniformis (strain ATCC 14580 / DSM 13 / JCM 2505 / CCUG 7422 / NBRC 12200 / NCIMB 9375 / NCTC 10341 / NRRL NRS-1264 / Gibson 46)</name>
    <dbReference type="NCBI Taxonomy" id="279010"/>
    <lineage>
        <taxon>Bacteria</taxon>
        <taxon>Bacillati</taxon>
        <taxon>Bacillota</taxon>
        <taxon>Bacilli</taxon>
        <taxon>Bacillales</taxon>
        <taxon>Bacillaceae</taxon>
        <taxon>Bacillus</taxon>
    </lineage>
</organism>
<keyword id="KW-0450">Lipoyl</keyword>
<keyword id="KW-1185">Reference proteome</keyword>
<dbReference type="EMBL" id="CP000002">
    <property type="protein sequence ID" value="AAU24920.1"/>
    <property type="molecule type" value="Genomic_DNA"/>
</dbReference>
<dbReference type="EMBL" id="AE017333">
    <property type="protein sequence ID" value="AAU42289.1"/>
    <property type="molecule type" value="Genomic_DNA"/>
</dbReference>
<dbReference type="RefSeq" id="WP_003185066.1">
    <property type="nucleotide sequence ID" value="NC_006322.1"/>
</dbReference>
<dbReference type="SMR" id="Q65F75"/>
<dbReference type="STRING" id="279010.BL02176"/>
<dbReference type="GeneID" id="92859960"/>
<dbReference type="KEGG" id="bld:BLi03462"/>
<dbReference type="KEGG" id="bli:BL02176"/>
<dbReference type="eggNOG" id="COG0509">
    <property type="taxonomic scope" value="Bacteria"/>
</dbReference>
<dbReference type="HOGENOM" id="CLU_097408_2_2_9"/>
<dbReference type="Proteomes" id="UP000000606">
    <property type="component" value="Chromosome"/>
</dbReference>
<dbReference type="GO" id="GO:0005829">
    <property type="term" value="C:cytosol"/>
    <property type="evidence" value="ECO:0007669"/>
    <property type="project" value="TreeGrafter"/>
</dbReference>
<dbReference type="GO" id="GO:0005960">
    <property type="term" value="C:glycine cleavage complex"/>
    <property type="evidence" value="ECO:0007669"/>
    <property type="project" value="InterPro"/>
</dbReference>
<dbReference type="GO" id="GO:0019464">
    <property type="term" value="P:glycine decarboxylation via glycine cleavage system"/>
    <property type="evidence" value="ECO:0007669"/>
    <property type="project" value="UniProtKB-UniRule"/>
</dbReference>
<dbReference type="CDD" id="cd06848">
    <property type="entry name" value="GCS_H"/>
    <property type="match status" value="1"/>
</dbReference>
<dbReference type="FunFam" id="2.40.50.100:FF:000011">
    <property type="entry name" value="Glycine cleavage system H protein"/>
    <property type="match status" value="1"/>
</dbReference>
<dbReference type="Gene3D" id="2.40.50.100">
    <property type="match status" value="1"/>
</dbReference>
<dbReference type="HAMAP" id="MF_00272">
    <property type="entry name" value="GcvH"/>
    <property type="match status" value="1"/>
</dbReference>
<dbReference type="InterPro" id="IPR003016">
    <property type="entry name" value="2-oxoA_DH_lipoyl-BS"/>
</dbReference>
<dbReference type="InterPro" id="IPR000089">
    <property type="entry name" value="Biotin_lipoyl"/>
</dbReference>
<dbReference type="InterPro" id="IPR002930">
    <property type="entry name" value="GCV_H"/>
</dbReference>
<dbReference type="InterPro" id="IPR033753">
    <property type="entry name" value="GCV_H/Fam206"/>
</dbReference>
<dbReference type="InterPro" id="IPR017453">
    <property type="entry name" value="GCV_H_sub"/>
</dbReference>
<dbReference type="InterPro" id="IPR011053">
    <property type="entry name" value="Single_hybrid_motif"/>
</dbReference>
<dbReference type="NCBIfam" id="TIGR00527">
    <property type="entry name" value="gcvH"/>
    <property type="match status" value="1"/>
</dbReference>
<dbReference type="NCBIfam" id="NF002270">
    <property type="entry name" value="PRK01202.1"/>
    <property type="match status" value="1"/>
</dbReference>
<dbReference type="PANTHER" id="PTHR11715">
    <property type="entry name" value="GLYCINE CLEAVAGE SYSTEM H PROTEIN"/>
    <property type="match status" value="1"/>
</dbReference>
<dbReference type="PANTHER" id="PTHR11715:SF3">
    <property type="entry name" value="GLYCINE CLEAVAGE SYSTEM H PROTEIN-RELATED"/>
    <property type="match status" value="1"/>
</dbReference>
<dbReference type="Pfam" id="PF01597">
    <property type="entry name" value="GCV_H"/>
    <property type="match status" value="1"/>
</dbReference>
<dbReference type="SUPFAM" id="SSF51230">
    <property type="entry name" value="Single hybrid motif"/>
    <property type="match status" value="1"/>
</dbReference>
<dbReference type="PROSITE" id="PS50968">
    <property type="entry name" value="BIOTINYL_LIPOYL"/>
    <property type="match status" value="1"/>
</dbReference>
<dbReference type="PROSITE" id="PS00189">
    <property type="entry name" value="LIPOYL"/>
    <property type="match status" value="1"/>
</dbReference>
<proteinExistence type="inferred from homology"/>
<protein>
    <recommendedName>
        <fullName evidence="1">Glycine cleavage system H protein</fullName>
    </recommendedName>
    <alternativeName>
        <fullName evidence="1">Octanoyl/lipoyl carrier protein</fullName>
    </alternativeName>
</protein>
<sequence>MSTPKELRYSEEHEWVKTEGDKVRIGITDFAQSELGDIVFVELPEVGDEIKADEPFGSVESVKTVSELYAPINGKVVEVNEDLEDSPEFVNESPYEKAWMIVVEPSDASEIENLMTAGQYEDMIKED</sequence>
<feature type="chain" id="PRO_0000302349" description="Glycine cleavage system H protein">
    <location>
        <begin position="1"/>
        <end position="127"/>
    </location>
</feature>
<feature type="domain" description="Lipoyl-binding" evidence="2">
    <location>
        <begin position="22"/>
        <end position="104"/>
    </location>
</feature>
<feature type="modified residue" description="N6-lipoyllysine" evidence="1">
    <location>
        <position position="63"/>
    </location>
</feature>
<accession>Q65F75</accession>
<accession>Q62QP0</accession>
<gene>
    <name evidence="1" type="primary">gcvH</name>
    <name type="ordered locus">BLi03462</name>
    <name type="ordered locus">BL02176</name>
</gene>
<reference key="1">
    <citation type="journal article" date="2004" name="J. Mol. Microbiol. Biotechnol.">
        <title>The complete genome sequence of Bacillus licheniformis DSM13, an organism with great industrial potential.</title>
        <authorList>
            <person name="Veith B."/>
            <person name="Herzberg C."/>
            <person name="Steckel S."/>
            <person name="Feesche J."/>
            <person name="Maurer K.H."/>
            <person name="Ehrenreich P."/>
            <person name="Baeumer S."/>
            <person name="Henne A."/>
            <person name="Liesegang H."/>
            <person name="Merkl R."/>
            <person name="Ehrenreich A."/>
            <person name="Gottschalk G."/>
        </authorList>
    </citation>
    <scope>NUCLEOTIDE SEQUENCE [LARGE SCALE GENOMIC DNA]</scope>
    <source>
        <strain>ATCC 14580 / DSM 13 / JCM 2505 / CCUG 7422 / NBRC 12200 / NCIMB 9375 / NCTC 10341 / NRRL NRS-1264 / Gibson 46</strain>
    </source>
</reference>
<reference key="2">
    <citation type="journal article" date="2004" name="Genome Biol.">
        <title>Complete genome sequence of the industrial bacterium Bacillus licheniformis and comparisons with closely related Bacillus species.</title>
        <authorList>
            <person name="Rey M.W."/>
            <person name="Ramaiya P."/>
            <person name="Nelson B.A."/>
            <person name="Brody-Karpin S.D."/>
            <person name="Zaretsky E.J."/>
            <person name="Tang M."/>
            <person name="Lopez de Leon A."/>
            <person name="Xiang H."/>
            <person name="Gusti V."/>
            <person name="Clausen I.G."/>
            <person name="Olsen P.B."/>
            <person name="Rasmussen M.D."/>
            <person name="Andersen J.T."/>
            <person name="Joergensen P.L."/>
            <person name="Larsen T.S."/>
            <person name="Sorokin A."/>
            <person name="Bolotin A."/>
            <person name="Lapidus A."/>
            <person name="Galleron N."/>
            <person name="Ehrlich S.D."/>
            <person name="Berka R.M."/>
        </authorList>
    </citation>
    <scope>NUCLEOTIDE SEQUENCE [LARGE SCALE GENOMIC DNA]</scope>
    <source>
        <strain>ATCC 14580 / DSM 13 / JCM 2505 / CCUG 7422 / NBRC 12200 / NCIMB 9375 / NCTC 10341 / NRRL NRS-1264 / Gibson 46</strain>
    </source>
</reference>
<name>GCSH_BACLD</name>
<comment type="function">
    <text evidence="1">The glycine cleavage system catalyzes the degradation of glycine. The H protein shuttles the methylamine group of glycine from the P protein to the T protein.</text>
</comment>
<comment type="function">
    <text evidence="1">Is also involved in protein lipoylation via its role as an octanoyl/lipoyl carrier protein intermediate.</text>
</comment>
<comment type="cofactor">
    <cofactor evidence="1">
        <name>(R)-lipoate</name>
        <dbReference type="ChEBI" id="CHEBI:83088"/>
    </cofactor>
    <text evidence="1">Binds 1 lipoyl cofactor covalently.</text>
</comment>
<comment type="subunit">
    <text evidence="1">The glycine cleavage system is composed of four proteins: P, T, L and H.</text>
</comment>
<comment type="similarity">
    <text evidence="1">Belongs to the GcvH family.</text>
</comment>
<evidence type="ECO:0000255" key="1">
    <source>
        <dbReference type="HAMAP-Rule" id="MF_00272"/>
    </source>
</evidence>
<evidence type="ECO:0000255" key="2">
    <source>
        <dbReference type="PROSITE-ProRule" id="PRU01066"/>
    </source>
</evidence>